<keyword id="KW-1015">Disulfide bond</keyword>
<keyword id="KW-0872">Ion channel impairing toxin</keyword>
<keyword id="KW-0528">Neurotoxin</keyword>
<keyword id="KW-0632">Potassium channel impairing toxin</keyword>
<keyword id="KW-0964">Secreted</keyword>
<keyword id="KW-0732">Signal</keyword>
<keyword id="KW-0800">Toxin</keyword>
<evidence type="ECO:0000250" key="1"/>
<evidence type="ECO:0000255" key="2"/>
<evidence type="ECO:0000305" key="3"/>
<comment type="function">
    <text evidence="1">Inhibits voltage-gated potassium channels.</text>
</comment>
<comment type="subcellular location">
    <subcellularLocation>
        <location evidence="1">Secreted</location>
    </subcellularLocation>
</comment>
<comment type="tissue specificity">
    <text>Expressed by the venom gland.</text>
</comment>
<comment type="domain">
    <text evidence="3">Has the structural arrangement of an alpha-helix connected to antiparallel beta-sheets by disulfide bonds (CS-alpha/beta).</text>
</comment>
<comment type="similarity">
    <text evidence="3">Belongs to the short scorpion toxin superfamily. Potassium channel inhibitor family. Alpha-KTx 12 subfamily.</text>
</comment>
<proteinExistence type="evidence at transcript level"/>
<reference key="1">
    <citation type="journal article" date="2010" name="BMC Genomics">
        <title>Comparative venom gland transcriptome analysis of the scorpion Lychas mucronatus reveals intraspecific toxic gene diversity and new venomous components.</title>
        <authorList>
            <person name="Zhao R."/>
            <person name="Ma Y."/>
            <person name="He Y."/>
            <person name="Di Z."/>
            <person name="Wu Y.-L."/>
            <person name="Cao Z.-J."/>
            <person name="Li W.-X."/>
        </authorList>
    </citation>
    <scope>NUCLEOTIDE SEQUENCE [MRNA]</scope>
    <source>
        <strain>Yunnan</strain>
        <tissue>Venom gland</tissue>
    </source>
</reference>
<name>KA126_LYCMC</name>
<organism>
    <name type="scientific">Lychas mucronatus</name>
    <name type="common">Chinese swimming scorpion</name>
    <dbReference type="NCBI Taxonomy" id="172552"/>
    <lineage>
        <taxon>Eukaryota</taxon>
        <taxon>Metazoa</taxon>
        <taxon>Ecdysozoa</taxon>
        <taxon>Arthropoda</taxon>
        <taxon>Chelicerata</taxon>
        <taxon>Arachnida</taxon>
        <taxon>Scorpiones</taxon>
        <taxon>Buthida</taxon>
        <taxon>Buthoidea</taxon>
        <taxon>Buthidae</taxon>
        <taxon>Lychas</taxon>
    </lineage>
</organism>
<dbReference type="EMBL" id="GT028917">
    <property type="status" value="NOT_ANNOTATED_CDS"/>
    <property type="molecule type" value="mRNA"/>
</dbReference>
<dbReference type="SMR" id="P0CI47"/>
<dbReference type="GO" id="GO:0005576">
    <property type="term" value="C:extracellular region"/>
    <property type="evidence" value="ECO:0007669"/>
    <property type="project" value="UniProtKB-SubCell"/>
</dbReference>
<dbReference type="GO" id="GO:0008200">
    <property type="term" value="F:ion channel inhibitor activity"/>
    <property type="evidence" value="ECO:0007669"/>
    <property type="project" value="InterPro"/>
</dbReference>
<dbReference type="GO" id="GO:0015459">
    <property type="term" value="F:potassium channel regulator activity"/>
    <property type="evidence" value="ECO:0007669"/>
    <property type="project" value="UniProtKB-KW"/>
</dbReference>
<dbReference type="GO" id="GO:0090729">
    <property type="term" value="F:toxin activity"/>
    <property type="evidence" value="ECO:0007669"/>
    <property type="project" value="UniProtKB-KW"/>
</dbReference>
<dbReference type="Gene3D" id="3.30.30.10">
    <property type="entry name" value="Knottin, scorpion toxin-like"/>
    <property type="match status" value="1"/>
</dbReference>
<dbReference type="InterPro" id="IPR036574">
    <property type="entry name" value="Scorpion_toxin-like_sf"/>
</dbReference>
<dbReference type="InterPro" id="IPR001947">
    <property type="entry name" value="Scorpion_toxinS_K_inh"/>
</dbReference>
<dbReference type="Pfam" id="PF00451">
    <property type="entry name" value="Toxin_2"/>
    <property type="match status" value="1"/>
</dbReference>
<dbReference type="SUPFAM" id="SSF57095">
    <property type="entry name" value="Scorpion toxin-like"/>
    <property type="match status" value="1"/>
</dbReference>
<feature type="signal peptide" evidence="2">
    <location>
        <begin position="1"/>
        <end position="22"/>
    </location>
</feature>
<feature type="chain" id="PRO_0000403827" description="Potassium channel toxin alpha-KTx 12.6">
    <location>
        <begin position="23"/>
        <end position="65"/>
    </location>
</feature>
<feature type="disulfide bond" evidence="1">
    <location>
        <begin position="30"/>
        <end position="51"/>
    </location>
</feature>
<feature type="disulfide bond" evidence="1">
    <location>
        <begin position="36"/>
        <end position="56"/>
    </location>
</feature>
<feature type="disulfide bond" evidence="1">
    <location>
        <begin position="40"/>
        <end position="58"/>
    </location>
</feature>
<protein>
    <recommendedName>
        <fullName>Potassium channel toxin alpha-KTx 12.6</fullName>
    </recommendedName>
</protein>
<sequence>MKMKIFIITIVIALFITSIVEAQNKLDVKCVRLETCREPCKKQLCLLPMKCMNGKCVCSPSRKIC</sequence>
<accession>P0CI47</accession>